<dbReference type="EMBL" id="DQ887676">
    <property type="protein sequence ID" value="ABH88335.1"/>
    <property type="molecule type" value="Genomic_DNA"/>
</dbReference>
<dbReference type="RefSeq" id="YP_784425.1">
    <property type="nucleotide sequence ID" value="NC_008456.1"/>
</dbReference>
<dbReference type="SMR" id="Q06GV8"/>
<dbReference type="GeneID" id="4363611"/>
<dbReference type="GO" id="GO:0009507">
    <property type="term" value="C:chloroplast"/>
    <property type="evidence" value="ECO:0007669"/>
    <property type="project" value="UniProtKB-SubCell"/>
</dbReference>
<dbReference type="GO" id="GO:0022627">
    <property type="term" value="C:cytosolic small ribosomal subunit"/>
    <property type="evidence" value="ECO:0007669"/>
    <property type="project" value="TreeGrafter"/>
</dbReference>
<dbReference type="GO" id="GO:0019843">
    <property type="term" value="F:rRNA binding"/>
    <property type="evidence" value="ECO:0007669"/>
    <property type="project" value="UniProtKB-UniRule"/>
</dbReference>
<dbReference type="GO" id="GO:0003735">
    <property type="term" value="F:structural constituent of ribosome"/>
    <property type="evidence" value="ECO:0007669"/>
    <property type="project" value="InterPro"/>
</dbReference>
<dbReference type="GO" id="GO:0006412">
    <property type="term" value="P:translation"/>
    <property type="evidence" value="ECO:0007669"/>
    <property type="project" value="UniProtKB-UniRule"/>
</dbReference>
<dbReference type="CDD" id="cd02412">
    <property type="entry name" value="KH-II_30S_S3"/>
    <property type="match status" value="1"/>
</dbReference>
<dbReference type="FunFam" id="3.30.1140.32:FF:000003">
    <property type="entry name" value="30S ribosomal protein S3, chloroplastic"/>
    <property type="match status" value="1"/>
</dbReference>
<dbReference type="FunFam" id="3.30.300.20:FF:000008">
    <property type="entry name" value="30S ribosomal protein S3, chloroplastic"/>
    <property type="match status" value="1"/>
</dbReference>
<dbReference type="Gene3D" id="3.30.300.20">
    <property type="match status" value="1"/>
</dbReference>
<dbReference type="Gene3D" id="3.30.1140.32">
    <property type="entry name" value="Ribosomal protein S3, C-terminal domain"/>
    <property type="match status" value="1"/>
</dbReference>
<dbReference type="HAMAP" id="MF_01309_B">
    <property type="entry name" value="Ribosomal_uS3_B"/>
    <property type="match status" value="1"/>
</dbReference>
<dbReference type="InterPro" id="IPR015946">
    <property type="entry name" value="KH_dom-like_a/b"/>
</dbReference>
<dbReference type="InterPro" id="IPR004044">
    <property type="entry name" value="KH_dom_type_2"/>
</dbReference>
<dbReference type="InterPro" id="IPR009019">
    <property type="entry name" value="KH_sf_prok-type"/>
</dbReference>
<dbReference type="InterPro" id="IPR036419">
    <property type="entry name" value="Ribosomal_S3_C_sf"/>
</dbReference>
<dbReference type="InterPro" id="IPR005704">
    <property type="entry name" value="Ribosomal_uS3_bac-typ"/>
</dbReference>
<dbReference type="InterPro" id="IPR001351">
    <property type="entry name" value="Ribosomal_uS3_C"/>
</dbReference>
<dbReference type="InterPro" id="IPR018280">
    <property type="entry name" value="Ribosomal_uS3_CS"/>
</dbReference>
<dbReference type="NCBIfam" id="TIGR01009">
    <property type="entry name" value="rpsC_bact"/>
    <property type="match status" value="1"/>
</dbReference>
<dbReference type="PANTHER" id="PTHR11760">
    <property type="entry name" value="30S/40S RIBOSOMAL PROTEIN S3"/>
    <property type="match status" value="1"/>
</dbReference>
<dbReference type="PANTHER" id="PTHR11760:SF19">
    <property type="entry name" value="SMALL RIBOSOMAL SUBUNIT PROTEIN US3C"/>
    <property type="match status" value="1"/>
</dbReference>
<dbReference type="Pfam" id="PF00189">
    <property type="entry name" value="Ribosomal_S3_C"/>
    <property type="match status" value="1"/>
</dbReference>
<dbReference type="SUPFAM" id="SSF54814">
    <property type="entry name" value="Prokaryotic type KH domain (KH-domain type II)"/>
    <property type="match status" value="1"/>
</dbReference>
<dbReference type="SUPFAM" id="SSF54821">
    <property type="entry name" value="Ribosomal protein S3 C-terminal domain"/>
    <property type="match status" value="1"/>
</dbReference>
<dbReference type="PROSITE" id="PS50823">
    <property type="entry name" value="KH_TYPE_2"/>
    <property type="match status" value="1"/>
</dbReference>
<dbReference type="PROSITE" id="PS00548">
    <property type="entry name" value="RIBOSOMAL_S3"/>
    <property type="match status" value="1"/>
</dbReference>
<gene>
    <name type="primary">rps3</name>
</gene>
<geneLocation type="chloroplast"/>
<comment type="subunit">
    <text evidence="1">Part of the 30S ribosomal subunit.</text>
</comment>
<comment type="subcellular location">
    <subcellularLocation>
        <location>Plastid</location>
        <location>Chloroplast</location>
    </subcellularLocation>
</comment>
<comment type="similarity">
    <text evidence="2">Belongs to the universal ribosomal protein uS3 family.</text>
</comment>
<organism>
    <name type="scientific">Drimys granadensis</name>
    <dbReference type="NCBI Taxonomy" id="224735"/>
    <lineage>
        <taxon>Eukaryota</taxon>
        <taxon>Viridiplantae</taxon>
        <taxon>Streptophyta</taxon>
        <taxon>Embryophyta</taxon>
        <taxon>Tracheophyta</taxon>
        <taxon>Spermatophyta</taxon>
        <taxon>Magnoliopsida</taxon>
        <taxon>Magnoliidae</taxon>
        <taxon>Canellales</taxon>
        <taxon>Winteraceae</taxon>
        <taxon>Drimys</taxon>
    </lineage>
</organism>
<name>RR3_DRIGR</name>
<accession>Q06GV8</accession>
<sequence>MGKKINPLGFRLGANQSHRSLWFAQPKSYSRGLQEDEKIRDCIKNYVQKNMRSGSEGISHIEIKKKIDLIQVIIYIGFPNLLIEGRTRGIEELRINVQKGFRSVNRRLNIAITRVAKPYGQPNILAEYIALQLKNRVSFRKAMKKAIELTEQADTKGIQVQIAGRIDGKEIARVEWIREGRVPLQTIRAKIDHCSYTVRTIYGVLGIKIWIFVDEQ</sequence>
<keyword id="KW-0150">Chloroplast</keyword>
<keyword id="KW-0934">Plastid</keyword>
<keyword id="KW-0687">Ribonucleoprotein</keyword>
<keyword id="KW-0689">Ribosomal protein</keyword>
<keyword id="KW-0694">RNA-binding</keyword>
<keyword id="KW-0699">rRNA-binding</keyword>
<proteinExistence type="inferred from homology"/>
<protein>
    <recommendedName>
        <fullName evidence="2">Small ribosomal subunit protein uS3c</fullName>
    </recommendedName>
    <alternativeName>
        <fullName>30S ribosomal protein S3, chloroplastic</fullName>
    </alternativeName>
</protein>
<reference key="1">
    <citation type="journal article" date="2006" name="BMC Evol. Biol.">
        <title>Complete plastid genome sequences of Drimys, Liriodendron, and Piper: implications for the phylogenetic relationships of magnoliids.</title>
        <authorList>
            <person name="Cai Z."/>
            <person name="Penaflor C."/>
            <person name="Kuehl J.V."/>
            <person name="Leebens-Mack J."/>
            <person name="Carlson J.E."/>
            <person name="dePamphilis C.W."/>
            <person name="Boore J.L."/>
            <person name="Jansen R.K."/>
        </authorList>
    </citation>
    <scope>NUCLEOTIDE SEQUENCE [LARGE SCALE GENOMIC DNA]</scope>
</reference>
<feature type="chain" id="PRO_0000276990" description="Small ribosomal subunit protein uS3c">
    <location>
        <begin position="1"/>
        <end position="216"/>
    </location>
</feature>
<feature type="domain" description="KH type-2">
    <location>
        <begin position="43"/>
        <end position="116"/>
    </location>
</feature>
<evidence type="ECO:0000250" key="1"/>
<evidence type="ECO:0000305" key="2"/>